<comment type="function">
    <text evidence="1">DNA-dependent RNA polymerase (RNAP) catalyzes the transcription of DNA into RNA using the four ribonucleoside triphosphates as substrates. Forms part of the jaw domain.</text>
</comment>
<comment type="catalytic activity">
    <reaction evidence="1">
        <text>RNA(n) + a ribonucleoside 5'-triphosphate = RNA(n+1) + diphosphate</text>
        <dbReference type="Rhea" id="RHEA:21248"/>
        <dbReference type="Rhea" id="RHEA-COMP:14527"/>
        <dbReference type="Rhea" id="RHEA-COMP:17342"/>
        <dbReference type="ChEBI" id="CHEBI:33019"/>
        <dbReference type="ChEBI" id="CHEBI:61557"/>
        <dbReference type="ChEBI" id="CHEBI:140395"/>
        <dbReference type="EC" id="2.7.7.6"/>
    </reaction>
</comment>
<comment type="subunit">
    <text evidence="1">Part of the RNA polymerase complex.</text>
</comment>
<comment type="subcellular location">
    <subcellularLocation>
        <location evidence="1">Cytoplasm</location>
    </subcellularLocation>
</comment>
<comment type="similarity">
    <text evidence="1">Belongs to the RNA polymerase beta' chain family.</text>
</comment>
<gene>
    <name evidence="1" type="primary">rpo1C</name>
    <name evidence="1" type="synonym">rpoA2</name>
    <name type="ordered locus">MA_1262</name>
</gene>
<sequence>MSEATIDSMLKDLPFPSNILNTLREDVLKAGVSKKEMEEIIEKMMEEYATSCIEPCDAAGVVAAQSIGEPGTQMTMRTFHYAGVAEINVTLGLPRLIEIVDARKIPSTPMMTIALSKEHPEDYAYDREKTRALAWEIEATKIDHIADVTTDLSQMKLIIDLHEKAMEGRNITIDQVKEKFNEELNVLVSISPDIDNQIVITPGEPSYRELLQLAKSIHNVTLKGIEGIKRVVVRKEGEEYTLYTEGSALRDVLQFEGVDKTRTSTNNINEIYEVLGIEAARNAIIKEATDTLREQGLTVDIRHIMLVADLMTCDGEVKQIGRHGISGEKASVFARAAFEVTVNHLLDAGMRGDVDQLQGVTENIIVGQPIRMGTGDVHLISRRVEKVEAKELEAEEE</sequence>
<reference key="1">
    <citation type="journal article" date="2002" name="Genome Res.">
        <title>The genome of Methanosarcina acetivorans reveals extensive metabolic and physiological diversity.</title>
        <authorList>
            <person name="Galagan J.E."/>
            <person name="Nusbaum C."/>
            <person name="Roy A."/>
            <person name="Endrizzi M.G."/>
            <person name="Macdonald P."/>
            <person name="FitzHugh W."/>
            <person name="Calvo S."/>
            <person name="Engels R."/>
            <person name="Smirnov S."/>
            <person name="Atnoor D."/>
            <person name="Brown A."/>
            <person name="Allen N."/>
            <person name="Naylor J."/>
            <person name="Stange-Thomann N."/>
            <person name="DeArellano K."/>
            <person name="Johnson R."/>
            <person name="Linton L."/>
            <person name="McEwan P."/>
            <person name="McKernan K."/>
            <person name="Talamas J."/>
            <person name="Tirrell A."/>
            <person name="Ye W."/>
            <person name="Zimmer A."/>
            <person name="Barber R.D."/>
            <person name="Cann I."/>
            <person name="Graham D.E."/>
            <person name="Grahame D.A."/>
            <person name="Guss A.M."/>
            <person name="Hedderich R."/>
            <person name="Ingram-Smith C."/>
            <person name="Kuettner H.C."/>
            <person name="Krzycki J.A."/>
            <person name="Leigh J.A."/>
            <person name="Li W."/>
            <person name="Liu J."/>
            <person name="Mukhopadhyay B."/>
            <person name="Reeve J.N."/>
            <person name="Smith K."/>
            <person name="Springer T.A."/>
            <person name="Umayam L.A."/>
            <person name="White O."/>
            <person name="White R.H."/>
            <person name="de Macario E.C."/>
            <person name="Ferry J.G."/>
            <person name="Jarrell K.F."/>
            <person name="Jing H."/>
            <person name="Macario A.J.L."/>
            <person name="Paulsen I.T."/>
            <person name="Pritchett M."/>
            <person name="Sowers K.R."/>
            <person name="Swanson R.V."/>
            <person name="Zinder S.H."/>
            <person name="Lander E."/>
            <person name="Metcalf W.W."/>
            <person name="Birren B."/>
        </authorList>
    </citation>
    <scope>NUCLEOTIDE SEQUENCE [LARGE SCALE GENOMIC DNA]</scope>
    <source>
        <strain>ATCC 35395 / DSM 2834 / JCM 12185 / C2A</strain>
    </source>
</reference>
<keyword id="KW-0963">Cytoplasm</keyword>
<keyword id="KW-0238">DNA-binding</keyword>
<keyword id="KW-0240">DNA-directed RNA polymerase</keyword>
<keyword id="KW-0548">Nucleotidyltransferase</keyword>
<keyword id="KW-1185">Reference proteome</keyword>
<keyword id="KW-0804">Transcription</keyword>
<keyword id="KW-0808">Transferase</keyword>
<evidence type="ECO:0000255" key="1">
    <source>
        <dbReference type="HAMAP-Rule" id="MF_00411"/>
    </source>
</evidence>
<proteinExistence type="inferred from homology"/>
<name>RPO1C_METAC</name>
<organism>
    <name type="scientific">Methanosarcina acetivorans (strain ATCC 35395 / DSM 2834 / JCM 12185 / C2A)</name>
    <dbReference type="NCBI Taxonomy" id="188937"/>
    <lineage>
        <taxon>Archaea</taxon>
        <taxon>Methanobacteriati</taxon>
        <taxon>Methanobacteriota</taxon>
        <taxon>Stenosarchaea group</taxon>
        <taxon>Methanomicrobia</taxon>
        <taxon>Methanosarcinales</taxon>
        <taxon>Methanosarcinaceae</taxon>
        <taxon>Methanosarcina</taxon>
    </lineage>
</organism>
<protein>
    <recommendedName>
        <fullName evidence="1">DNA-directed RNA polymerase subunit Rpo1C</fullName>
        <ecNumber evidence="1">2.7.7.6</ecNumber>
    </recommendedName>
    <alternativeName>
        <fullName evidence="1">DNA-directed RNA polymerase subunit A''</fullName>
    </alternativeName>
</protein>
<accession>Q8TRB8</accession>
<feature type="chain" id="PRO_0000074015" description="DNA-directed RNA polymerase subunit Rpo1C">
    <location>
        <begin position="1"/>
        <end position="397"/>
    </location>
</feature>
<dbReference type="EC" id="2.7.7.6" evidence="1"/>
<dbReference type="EMBL" id="AE010299">
    <property type="protein sequence ID" value="AAM04681.1"/>
    <property type="molecule type" value="Genomic_DNA"/>
</dbReference>
<dbReference type="SMR" id="Q8TRB8"/>
<dbReference type="STRING" id="188937.MA_1262"/>
<dbReference type="EnsemblBacteria" id="AAM04681">
    <property type="protein sequence ID" value="AAM04681"/>
    <property type="gene ID" value="MA_1262"/>
</dbReference>
<dbReference type="KEGG" id="mac:MA_1262"/>
<dbReference type="HOGENOM" id="CLU_037097_1_0_2"/>
<dbReference type="InParanoid" id="Q8TRB8"/>
<dbReference type="PhylomeDB" id="Q8TRB8"/>
<dbReference type="Proteomes" id="UP000002487">
    <property type="component" value="Chromosome"/>
</dbReference>
<dbReference type="GO" id="GO:0005737">
    <property type="term" value="C:cytoplasm"/>
    <property type="evidence" value="ECO:0007669"/>
    <property type="project" value="UniProtKB-SubCell"/>
</dbReference>
<dbReference type="GO" id="GO:0000428">
    <property type="term" value="C:DNA-directed RNA polymerase complex"/>
    <property type="evidence" value="ECO:0007669"/>
    <property type="project" value="UniProtKB-KW"/>
</dbReference>
<dbReference type="GO" id="GO:0003677">
    <property type="term" value="F:DNA binding"/>
    <property type="evidence" value="ECO:0007669"/>
    <property type="project" value="UniProtKB-UniRule"/>
</dbReference>
<dbReference type="GO" id="GO:0003899">
    <property type="term" value="F:DNA-directed RNA polymerase activity"/>
    <property type="evidence" value="ECO:0007669"/>
    <property type="project" value="UniProtKB-UniRule"/>
</dbReference>
<dbReference type="GO" id="GO:0006351">
    <property type="term" value="P:DNA-templated transcription"/>
    <property type="evidence" value="ECO:0007669"/>
    <property type="project" value="UniProtKB-UniRule"/>
</dbReference>
<dbReference type="CDD" id="cd06528">
    <property type="entry name" value="RNAP_A"/>
    <property type="match status" value="1"/>
</dbReference>
<dbReference type="Gene3D" id="1.10.150.390">
    <property type="match status" value="1"/>
</dbReference>
<dbReference type="HAMAP" id="MF_00411">
    <property type="entry name" value="RNApol_arch_Rpo1C"/>
    <property type="match status" value="1"/>
</dbReference>
<dbReference type="InterPro" id="IPR045867">
    <property type="entry name" value="DNA-dir_RpoC_beta_prime"/>
</dbReference>
<dbReference type="InterPro" id="IPR007081">
    <property type="entry name" value="RNA_pol_Rpb1_5"/>
</dbReference>
<dbReference type="InterPro" id="IPR012757">
    <property type="entry name" value="RPO1C"/>
</dbReference>
<dbReference type="NCBIfam" id="TIGR02389">
    <property type="entry name" value="RNA_pol_rpoA2"/>
    <property type="match status" value="1"/>
</dbReference>
<dbReference type="PANTHER" id="PTHR19376">
    <property type="entry name" value="DNA-DIRECTED RNA POLYMERASE"/>
    <property type="match status" value="1"/>
</dbReference>
<dbReference type="PANTHER" id="PTHR19376:SF32">
    <property type="entry name" value="DNA-DIRECTED RNA POLYMERASE III SUBUNIT RPC1"/>
    <property type="match status" value="1"/>
</dbReference>
<dbReference type="Pfam" id="PF04998">
    <property type="entry name" value="RNA_pol_Rpb1_5"/>
    <property type="match status" value="1"/>
</dbReference>
<dbReference type="SUPFAM" id="SSF64484">
    <property type="entry name" value="beta and beta-prime subunits of DNA dependent RNA-polymerase"/>
    <property type="match status" value="1"/>
</dbReference>